<name>LRC18_RAT</name>
<dbReference type="EMBL" id="BC081908">
    <property type="protein sequence ID" value="AAH81908.1"/>
    <property type="molecule type" value="mRNA"/>
</dbReference>
<dbReference type="RefSeq" id="NP_001014021.1">
    <property type="nucleotide sequence ID" value="NM_001013999.1"/>
</dbReference>
<dbReference type="RefSeq" id="XP_017455572.1">
    <property type="nucleotide sequence ID" value="XM_017600083.1"/>
</dbReference>
<dbReference type="SMR" id="Q66HD6"/>
<dbReference type="FunCoup" id="Q66HD6">
    <property type="interactions" value="7"/>
</dbReference>
<dbReference type="STRING" id="10116.ENSRNOP00000027204"/>
<dbReference type="PhosphoSitePlus" id="Q66HD6"/>
<dbReference type="PaxDb" id="10116-ENSRNOP00000027204"/>
<dbReference type="DNASU" id="306278"/>
<dbReference type="Ensembl" id="ENSRNOT00000027204.5">
    <property type="protein sequence ID" value="ENSRNOP00000027204.3"/>
    <property type="gene ID" value="ENSRNOG00000020080.5"/>
</dbReference>
<dbReference type="GeneID" id="306278"/>
<dbReference type="KEGG" id="rno:306278"/>
<dbReference type="UCSC" id="RGD:1311738">
    <property type="organism name" value="rat"/>
</dbReference>
<dbReference type="AGR" id="RGD:1311738"/>
<dbReference type="CTD" id="474354"/>
<dbReference type="RGD" id="1311738">
    <property type="gene designation" value="Lrrc18"/>
</dbReference>
<dbReference type="eggNOG" id="KOG0619">
    <property type="taxonomic scope" value="Eukaryota"/>
</dbReference>
<dbReference type="GeneTree" id="ENSGT00940000156026"/>
<dbReference type="HOGENOM" id="CLU_000288_18_15_1"/>
<dbReference type="InParanoid" id="Q66HD6"/>
<dbReference type="OrthoDB" id="676979at2759"/>
<dbReference type="PhylomeDB" id="Q66HD6"/>
<dbReference type="TreeFam" id="TF331129"/>
<dbReference type="PRO" id="PR:Q66HD6"/>
<dbReference type="Proteomes" id="UP000002494">
    <property type="component" value="Chromosome 16"/>
</dbReference>
<dbReference type="Bgee" id="ENSRNOG00000020080">
    <property type="expression patterns" value="Expressed in testis and 4 other cell types or tissues"/>
</dbReference>
<dbReference type="GO" id="GO:0005737">
    <property type="term" value="C:cytoplasm"/>
    <property type="evidence" value="ECO:0007669"/>
    <property type="project" value="UniProtKB-SubCell"/>
</dbReference>
<dbReference type="GO" id="GO:0035556">
    <property type="term" value="P:intracellular signal transduction"/>
    <property type="evidence" value="ECO:0000318"/>
    <property type="project" value="GO_Central"/>
</dbReference>
<dbReference type="FunFam" id="3.80.10.10:FF:000246">
    <property type="entry name" value="Leucine rich repeat containing 18"/>
    <property type="match status" value="1"/>
</dbReference>
<dbReference type="Gene3D" id="3.80.10.10">
    <property type="entry name" value="Ribonuclease Inhibitor"/>
    <property type="match status" value="1"/>
</dbReference>
<dbReference type="InterPro" id="IPR001611">
    <property type="entry name" value="Leu-rich_rpt"/>
</dbReference>
<dbReference type="InterPro" id="IPR003591">
    <property type="entry name" value="Leu-rich_rpt_typical-subtyp"/>
</dbReference>
<dbReference type="InterPro" id="IPR032675">
    <property type="entry name" value="LRR_dom_sf"/>
</dbReference>
<dbReference type="InterPro" id="IPR050216">
    <property type="entry name" value="LRR_domain-containing"/>
</dbReference>
<dbReference type="InterPro" id="IPR055414">
    <property type="entry name" value="LRR_R13L4/SHOC2-like"/>
</dbReference>
<dbReference type="PANTHER" id="PTHR48051">
    <property type="match status" value="1"/>
</dbReference>
<dbReference type="PANTHER" id="PTHR48051:SF42">
    <property type="entry name" value="LEUCINE-RICH REPEAT-CONTAINING PROTEIN 18-LIKE"/>
    <property type="match status" value="1"/>
</dbReference>
<dbReference type="Pfam" id="PF23598">
    <property type="entry name" value="LRR_14"/>
    <property type="match status" value="1"/>
</dbReference>
<dbReference type="SMART" id="SM00369">
    <property type="entry name" value="LRR_TYP"/>
    <property type="match status" value="4"/>
</dbReference>
<dbReference type="SUPFAM" id="SSF52058">
    <property type="entry name" value="L domain-like"/>
    <property type="match status" value="1"/>
</dbReference>
<dbReference type="PROSITE" id="PS51450">
    <property type="entry name" value="LRR"/>
    <property type="match status" value="5"/>
</dbReference>
<proteinExistence type="evidence at transcript level"/>
<accession>Q66HD6</accession>
<feature type="chain" id="PRO_0000084474" description="Leucine-rich repeat-containing protein 18">
    <location>
        <begin position="1"/>
        <end position="256"/>
    </location>
</feature>
<feature type="repeat" description="LRR 1">
    <location>
        <begin position="28"/>
        <end position="49"/>
    </location>
</feature>
<feature type="repeat" description="LRR 2">
    <location>
        <begin position="51"/>
        <end position="72"/>
    </location>
</feature>
<feature type="repeat" description="LRR 3">
    <location>
        <begin position="74"/>
        <end position="95"/>
    </location>
</feature>
<feature type="repeat" description="LRR 4">
    <location>
        <begin position="97"/>
        <end position="118"/>
    </location>
</feature>
<feature type="repeat" description="LRR 5">
    <location>
        <begin position="122"/>
        <end position="144"/>
    </location>
</feature>
<feature type="repeat" description="LRR 6">
    <location>
        <begin position="145"/>
        <end position="167"/>
    </location>
</feature>
<feature type="repeat" description="LRR 7">
    <location>
        <begin position="168"/>
        <end position="189"/>
    </location>
</feature>
<feature type="repeat" description="LRR 8">
    <location>
        <begin position="194"/>
        <end position="215"/>
    </location>
</feature>
<organism>
    <name type="scientific">Rattus norvegicus</name>
    <name type="common">Rat</name>
    <dbReference type="NCBI Taxonomy" id="10116"/>
    <lineage>
        <taxon>Eukaryota</taxon>
        <taxon>Metazoa</taxon>
        <taxon>Chordata</taxon>
        <taxon>Craniata</taxon>
        <taxon>Vertebrata</taxon>
        <taxon>Euteleostomi</taxon>
        <taxon>Mammalia</taxon>
        <taxon>Eutheria</taxon>
        <taxon>Euarchontoglires</taxon>
        <taxon>Glires</taxon>
        <taxon>Rodentia</taxon>
        <taxon>Myomorpha</taxon>
        <taxon>Muroidea</taxon>
        <taxon>Muridae</taxon>
        <taxon>Murinae</taxon>
        <taxon>Rattus</taxon>
    </lineage>
</organism>
<reference key="1">
    <citation type="journal article" date="2004" name="Genome Res.">
        <title>The status, quality, and expansion of the NIH full-length cDNA project: the Mammalian Gene Collection (MGC).</title>
        <authorList>
            <consortium name="The MGC Project Team"/>
        </authorList>
    </citation>
    <scope>NUCLEOTIDE SEQUENCE [LARGE SCALE MRNA]</scope>
    <source>
        <tissue>Testis</tissue>
    </source>
</reference>
<sequence length="256" mass="28845">MAKGGKSPKGKKITLNVAKNCIKITFDGRKRLDLSKMGITTFPKCILRLNEIDELDLSRNMIRKIPDSISKFQNLRWLDLHSNYIDKLPESIGQMTSLLFLNVSNNRLTTNGLPVELNQLKNIRTVNLGLNHLDSVPTTLGALKELHEVGLHDNLLTSIPAGISKLPKLKKLNVKRNPFPKPDESDMFVDSIKRLENLYLVEEKDLCSSCLQKCQQARDKLNKIRSMAPSAPRKAIFSNLVSPNSTAKESQEEWSV</sequence>
<protein>
    <recommendedName>
        <fullName>Leucine-rich repeat-containing protein 18</fullName>
    </recommendedName>
</protein>
<keyword id="KW-0963">Cytoplasm</keyword>
<keyword id="KW-0433">Leucine-rich repeat</keyword>
<keyword id="KW-1185">Reference proteome</keyword>
<keyword id="KW-0677">Repeat</keyword>
<comment type="function">
    <text>May be involved in the regulation of spermatogenesis and sperm maturation.</text>
</comment>
<comment type="subcellular location">
    <subcellularLocation>
        <location>Cytoplasm</location>
    </subcellularLocation>
</comment>
<gene>
    <name type="primary">Lrrc18</name>
</gene>